<organism>
    <name type="scientific">Acidithiobacillus ferridurans</name>
    <dbReference type="NCBI Taxonomy" id="1232575"/>
    <lineage>
        <taxon>Bacteria</taxon>
        <taxon>Pseudomonadati</taxon>
        <taxon>Pseudomonadota</taxon>
        <taxon>Acidithiobacillia</taxon>
        <taxon>Acidithiobacillales</taxon>
        <taxon>Acidithiobacillaceae</taxon>
        <taxon>Acidithiobacillus</taxon>
    </lineage>
</organism>
<dbReference type="EC" id="5.6.2.4" evidence="1"/>
<dbReference type="EMBL" id="AF032884">
    <property type="protein sequence ID" value="AAC21662.1"/>
    <property type="status" value="ALT_INIT"/>
    <property type="molecule type" value="Genomic_DNA"/>
</dbReference>
<dbReference type="EMBL" id="AP018795">
    <property type="protein sequence ID" value="BBF65575.1"/>
    <property type="molecule type" value="Genomic_DNA"/>
</dbReference>
<dbReference type="PIR" id="T45499">
    <property type="entry name" value="T45499"/>
</dbReference>
<dbReference type="SMR" id="O50224"/>
<dbReference type="KEGG" id="afj:AFERRID_17930"/>
<dbReference type="Proteomes" id="UP000280188">
    <property type="component" value="Chromosome"/>
</dbReference>
<dbReference type="GO" id="GO:0005524">
    <property type="term" value="F:ATP binding"/>
    <property type="evidence" value="ECO:0007669"/>
    <property type="project" value="UniProtKB-KW"/>
</dbReference>
<dbReference type="GO" id="GO:0016887">
    <property type="term" value="F:ATP hydrolysis activity"/>
    <property type="evidence" value="ECO:0007669"/>
    <property type="project" value="RHEA"/>
</dbReference>
<dbReference type="GO" id="GO:0003677">
    <property type="term" value="F:DNA binding"/>
    <property type="evidence" value="ECO:0007669"/>
    <property type="project" value="UniProtKB-KW"/>
</dbReference>
<dbReference type="GO" id="GO:0003678">
    <property type="term" value="F:DNA helicase activity"/>
    <property type="evidence" value="ECO:0007669"/>
    <property type="project" value="InterPro"/>
</dbReference>
<dbReference type="GO" id="GO:0006310">
    <property type="term" value="P:DNA recombination"/>
    <property type="evidence" value="ECO:0007669"/>
    <property type="project" value="UniProtKB-KW"/>
</dbReference>
<dbReference type="GO" id="GO:0006281">
    <property type="term" value="P:DNA repair"/>
    <property type="evidence" value="ECO:0007669"/>
    <property type="project" value="UniProtKB-KW"/>
</dbReference>
<dbReference type="CDD" id="cd04488">
    <property type="entry name" value="RecG_wedge_OBF"/>
    <property type="match status" value="1"/>
</dbReference>
<dbReference type="FunFam" id="3.40.50.300:FF:000391">
    <property type="entry name" value="ATP-dependent DNA helicase RecG"/>
    <property type="match status" value="1"/>
</dbReference>
<dbReference type="Gene3D" id="2.40.50.140">
    <property type="entry name" value="Nucleic acid-binding proteins"/>
    <property type="match status" value="1"/>
</dbReference>
<dbReference type="Gene3D" id="3.40.50.300">
    <property type="entry name" value="P-loop containing nucleotide triphosphate hydrolases"/>
    <property type="match status" value="2"/>
</dbReference>
<dbReference type="InterPro" id="IPR004609">
    <property type="entry name" value="ATP-dep_DNA_helicase_RecG"/>
</dbReference>
<dbReference type="InterPro" id="IPR011545">
    <property type="entry name" value="DEAD/DEAH_box_helicase_dom"/>
</dbReference>
<dbReference type="InterPro" id="IPR014001">
    <property type="entry name" value="Helicase_ATP-bd"/>
</dbReference>
<dbReference type="InterPro" id="IPR001650">
    <property type="entry name" value="Helicase_C-like"/>
</dbReference>
<dbReference type="InterPro" id="IPR012340">
    <property type="entry name" value="NA-bd_OB-fold"/>
</dbReference>
<dbReference type="InterPro" id="IPR027417">
    <property type="entry name" value="P-loop_NTPase"/>
</dbReference>
<dbReference type="InterPro" id="IPR047112">
    <property type="entry name" value="RecG/Mfd"/>
</dbReference>
<dbReference type="InterPro" id="IPR045562">
    <property type="entry name" value="RecG_dom3_C"/>
</dbReference>
<dbReference type="InterPro" id="IPR033454">
    <property type="entry name" value="RecG_wedge"/>
</dbReference>
<dbReference type="NCBIfam" id="NF008163">
    <property type="entry name" value="PRK10917.1-1"/>
    <property type="match status" value="1"/>
</dbReference>
<dbReference type="NCBIfam" id="NF008168">
    <property type="entry name" value="PRK10917.2-2"/>
    <property type="match status" value="1"/>
</dbReference>
<dbReference type="NCBIfam" id="TIGR00643">
    <property type="entry name" value="recG"/>
    <property type="match status" value="1"/>
</dbReference>
<dbReference type="PANTHER" id="PTHR47964">
    <property type="entry name" value="ATP-DEPENDENT DNA HELICASE HOMOLOG RECG, CHLOROPLASTIC"/>
    <property type="match status" value="1"/>
</dbReference>
<dbReference type="PANTHER" id="PTHR47964:SF1">
    <property type="entry name" value="ATP-DEPENDENT DNA HELICASE HOMOLOG RECG, CHLOROPLASTIC"/>
    <property type="match status" value="1"/>
</dbReference>
<dbReference type="Pfam" id="PF00270">
    <property type="entry name" value="DEAD"/>
    <property type="match status" value="1"/>
</dbReference>
<dbReference type="Pfam" id="PF00271">
    <property type="entry name" value="Helicase_C"/>
    <property type="match status" value="1"/>
</dbReference>
<dbReference type="Pfam" id="PF19833">
    <property type="entry name" value="RecG_dom3_C"/>
    <property type="match status" value="1"/>
</dbReference>
<dbReference type="Pfam" id="PF17191">
    <property type="entry name" value="RecG_wedge"/>
    <property type="match status" value="1"/>
</dbReference>
<dbReference type="SMART" id="SM00487">
    <property type="entry name" value="DEXDc"/>
    <property type="match status" value="1"/>
</dbReference>
<dbReference type="SMART" id="SM00490">
    <property type="entry name" value="HELICc"/>
    <property type="match status" value="1"/>
</dbReference>
<dbReference type="SUPFAM" id="SSF50249">
    <property type="entry name" value="Nucleic acid-binding proteins"/>
    <property type="match status" value="1"/>
</dbReference>
<dbReference type="SUPFAM" id="SSF52540">
    <property type="entry name" value="P-loop containing nucleoside triphosphate hydrolases"/>
    <property type="match status" value="2"/>
</dbReference>
<dbReference type="PROSITE" id="PS51192">
    <property type="entry name" value="HELICASE_ATP_BIND_1"/>
    <property type="match status" value="1"/>
</dbReference>
<feature type="chain" id="PRO_0000102160" description="ATP-dependent DNA helicase RecG">
    <location>
        <begin position="1"/>
        <end position="684"/>
    </location>
</feature>
<feature type="domain" description="Helicase ATP-binding" evidence="3">
    <location>
        <begin position="278"/>
        <end position="439"/>
    </location>
</feature>
<feature type="region of interest" description="Wedge domain" evidence="2">
    <location>
        <begin position="51"/>
        <end position="148"/>
    </location>
</feature>
<feature type="short sequence motif" description="DEAH box" evidence="3">
    <location>
        <begin position="392"/>
        <end position="395"/>
    </location>
</feature>
<feature type="binding site" evidence="3">
    <location>
        <begin position="291"/>
        <end position="298"/>
    </location>
    <ligand>
        <name>ATP</name>
        <dbReference type="ChEBI" id="CHEBI:30616"/>
    </ligand>
</feature>
<feature type="sequence conflict" description="In Ref. 2; BBF65575." evidence="5" ref="2">
    <original>V</original>
    <variation>A</variation>
    <location>
        <position position="4"/>
    </location>
</feature>
<feature type="sequence conflict" description="In Ref. 1; AAC21662." evidence="5" ref="1">
    <original>S</original>
    <variation>P</variation>
    <location>
        <position position="26"/>
    </location>
</feature>
<feature type="sequence conflict" description="In Ref. 1; AAC21662." evidence="5" ref="1">
    <original>R</original>
    <variation>C</variation>
    <location>
        <position position="65"/>
    </location>
</feature>
<feature type="sequence conflict" description="In Ref. 1; AAC21662." evidence="5" ref="1">
    <original>C</original>
    <variation>R</variation>
    <location>
        <position position="94"/>
    </location>
</feature>
<feature type="sequence conflict" description="In Ref. 1; AAC21662." evidence="5" ref="1">
    <original>AL</original>
    <variation>TV</variation>
    <location>
        <begin position="103"/>
        <end position="104"/>
    </location>
</feature>
<feature type="sequence conflict" description="In Ref. 1; AAC21662." evidence="5" ref="1">
    <original>H</original>
    <variation>R</variation>
    <location>
        <position position="148"/>
    </location>
</feature>
<feature type="sequence conflict" description="In Ref. 1; AAC21662." evidence="5" ref="1">
    <original>IAH</original>
    <variation>MAQ</variation>
    <location>
        <begin position="169"/>
        <end position="171"/>
    </location>
</feature>
<feature type="sequence conflict" description="In Ref. 1; AAC21662." evidence="5" ref="1">
    <original>MWQ</original>
    <variation>LWH</variation>
    <location>
        <begin position="252"/>
        <end position="254"/>
    </location>
</feature>
<feature type="sequence conflict" description="In Ref. 1; AAC21662." evidence="5" ref="1">
    <original>A</original>
    <variation>V</variation>
    <location>
        <position position="280"/>
    </location>
</feature>
<feature type="sequence conflict" description="In Ref. 1; AAC21662." evidence="5" ref="1">
    <original>V</original>
    <variation>A</variation>
    <location>
        <position position="354"/>
    </location>
</feature>
<feature type="sequence conflict" description="In Ref. 1; AAC21662." evidence="5" ref="1">
    <original>A</original>
    <variation>T</variation>
    <location>
        <position position="361"/>
    </location>
</feature>
<feature type="sequence conflict" description="In Ref. 1; AAC21662." evidence="5" ref="1">
    <original>RLS</original>
    <variation>SLR</variation>
    <location>
        <begin position="366"/>
        <end position="368"/>
    </location>
</feature>
<feature type="sequence conflict" description="In Ref. 1; AAC21662." evidence="5" ref="1">
    <original>A</original>
    <variation>V</variation>
    <location>
        <position position="382"/>
    </location>
</feature>
<feature type="sequence conflict" description="In Ref. 2; BBF65575." evidence="5" ref="2">
    <original>PRTLAMTVHADLEVSVIDALPPGRTPVETLVMPDSRRPELIGRMQHMLEAGRQIYWVCPLIEESEILELQAAEASVADLQAALPGVAVGLIHGRMRSAEKAEVMAAFQSGAVRILVATTVIEVGVDVPGASLMIIEHAERLGLAQLHQLRGRVGRGAQRSSCILLYHPPLSGKARERLRVMRETYDGFSIARKDLELRGPGEYLGTRQAGILQMRVANILRDEALLAMVPALAERLLQEDPEAVQAIVQRWLGNRVDYGQVG</original>
    <variation>MVEDGITVSGILLFGRTPNRFLPQAGIDAVAFPGVDKDYAARERAALRGPMTPLLNDAGDIVEAGLVEQAIAFVQRNTAIGGQLEEGGARRENLPAYPREAIREAIVNALIHRDYLLSSTDIELSIYEDRLEITSPGRLPNGITPARMLTGCRATRNQLIKDVMRDYRYLEHSGMGVPRKIVKCMREHNGTEPQLIEDGELFTVRLLR</variation>
    <location>
        <begin position="423"/>
        <end position="684"/>
    </location>
</feature>
<comment type="function">
    <text evidence="1">Plays a critical role in recombination and DNA repair. Helps process Holliday junction intermediates to mature products by catalyzing branch migration. Has replication fork regression activity, unwinds stalled or blocked replication forks to make a HJ that can be resolved. Has a DNA unwinding activity characteristic of a DNA helicase with 3'-5' polarity (By similarity).</text>
</comment>
<comment type="catalytic activity">
    <reaction evidence="1">
        <text>Couples ATP hydrolysis with the unwinding of duplex DNA by translocating in the 3'-5' direction.</text>
        <dbReference type="EC" id="5.6.2.4"/>
    </reaction>
</comment>
<comment type="catalytic activity">
    <reaction evidence="1">
        <text>ATP + H2O = ADP + phosphate + H(+)</text>
        <dbReference type="Rhea" id="RHEA:13065"/>
        <dbReference type="ChEBI" id="CHEBI:15377"/>
        <dbReference type="ChEBI" id="CHEBI:15378"/>
        <dbReference type="ChEBI" id="CHEBI:30616"/>
        <dbReference type="ChEBI" id="CHEBI:43474"/>
        <dbReference type="ChEBI" id="CHEBI:456216"/>
        <dbReference type="EC" id="5.6.2.4"/>
    </reaction>
</comment>
<comment type="subunit">
    <text evidence="2">Monomer (By similarity).</text>
</comment>
<comment type="domain">
    <text evidence="2">The wedge domain within the N-terminus inserts into the replication fork junction, where the lagging and leading strand split (By similarity).</text>
</comment>
<comment type="similarity">
    <text evidence="5">Belongs to the helicase family. RecG subfamily.</text>
</comment>
<comment type="sequence caution" evidence="5">
    <conflict type="erroneous initiation">
        <sequence resource="EMBL-CDS" id="AAC21662"/>
    </conflict>
    <text>Extended N-terminus.</text>
</comment>
<proteinExistence type="inferred from homology"/>
<evidence type="ECO:0000250" key="1">
    <source>
        <dbReference type="UniProtKB" id="P24230"/>
    </source>
</evidence>
<evidence type="ECO:0000250" key="2">
    <source>
        <dbReference type="UniProtKB" id="Q9WY48"/>
    </source>
</evidence>
<evidence type="ECO:0000255" key="3">
    <source>
        <dbReference type="PROSITE-ProRule" id="PRU00541"/>
    </source>
</evidence>
<evidence type="ECO:0000303" key="4">
    <source>
    </source>
</evidence>
<evidence type="ECO:0000305" key="5"/>
<evidence type="ECO:0000312" key="6">
    <source>
        <dbReference type="EMBL" id="BBF65575.1"/>
    </source>
</evidence>
<sequence length="684" mass="76219">MAGVKAGLYLQSSVSALRGVGPALVSRLQHMDLWRVQDVLFHLPSRYQDRRHIASMATLQAGQERAILGEIVRVDHQRGGREQWLVTVSDGSGCLQIRLFHMALALRAQWQVGRRLWCFGELRGGFHGLEMIHPEWQMADVPQFQAPHHLTPFYPSSEGITQAQWRRWIAHALTLLDQLPDYLENRLPPQWPGLREGLRLLHESADEIPSPQHPAWQRLALEELLANHLAVRRMRQSGMMQNAPCLRSKGQMWQRFLAHLPFSPTMAQERVIAEINADLARHRPMRRLLQGDVGSGKTLVAAAATLTALEAGYQVAMMAPTEILAEQLHARFQQWLEPLGLEVGYLVGSRSPRVRRETAEALAGGRLSLVIGTQSLFQEGVAFACLGLVIIDEQHRFGVEQRRQLLEKGAMPHLLVMTATPIPRTLAMTVHADLEVSVIDALPPGRTPVETLVMPDSRRPELIGRMQHMLEAGRQIYWVCPLIEESEILELQAAEASVADLQAALPGVAVGLIHGRMRSAEKAEVMAAFQSGAVRILVATTVIEVGVDVPGASLMIIEHAERLGLAQLHQLRGRVGRGAQRSSCILLYHPPLSGKARERLRVMRETYDGFSIARKDLELRGPGEYLGTRQAGILQMRVANILRDEALLAMVPALAERLLQEDPEAVQAIVQRWLGNRVDYGQVG</sequence>
<reference key="1">
    <citation type="journal article" date="1998" name="J. Bacteriol.">
        <title>A Tn7-like transposon is present in the glmUS region of the obligately chemoautolithotrophic bacterium Thiobacillus ferrooxidans.</title>
        <authorList>
            <person name="Oppon J.C."/>
            <person name="Sarnovsky R.J."/>
            <person name="Craig N.L."/>
            <person name="Rawlings D.E."/>
        </authorList>
    </citation>
    <scope>NUCLEOTIDE SEQUENCE [GENOMIC DNA]</scope>
    <source>
        <strain>ATCC 33020 / DSM 29468 / JCM 18981 / 11Fe</strain>
    </source>
</reference>
<reference evidence="6" key="2">
    <citation type="journal article" date="2018" name="Microbiol. Resour. Announc.">
        <title>Complete Genome Sequence of Acidithiobacillus ferridurans JCM 18981.</title>
        <authorList>
            <person name="Miyauchi T."/>
            <person name="Kouzuma A."/>
            <person name="Abe T."/>
            <person name="Watanabe K."/>
        </authorList>
    </citation>
    <scope>NUCLEOTIDE SEQUENCE [LARGE SCALE GENOMIC DNA]</scope>
    <source>
        <strain>ATCC 33020 / DSM 29468 / JCM 18981 / 11Fe</strain>
    </source>
</reference>
<gene>
    <name evidence="4" type="primary">recG</name>
    <name evidence="6" type="ORF">AFERRID_17930</name>
</gene>
<protein>
    <recommendedName>
        <fullName>ATP-dependent DNA helicase RecG</fullName>
        <ecNumber evidence="1">5.6.2.4</ecNumber>
    </recommendedName>
    <alternativeName>
        <fullName>DNA branch migration protein RecG</fullName>
    </alternativeName>
    <alternativeName>
        <fullName>Probable DNA 3'-5' helicase RecG</fullName>
    </alternativeName>
</protein>
<accession>O50224</accession>
<accession>A0A2Z6IMS1</accession>
<keyword id="KW-0067">ATP-binding</keyword>
<keyword id="KW-0227">DNA damage</keyword>
<keyword id="KW-0233">DNA recombination</keyword>
<keyword id="KW-0234">DNA repair</keyword>
<keyword id="KW-0238">DNA-binding</keyword>
<keyword id="KW-0347">Helicase</keyword>
<keyword id="KW-0378">Hydrolase</keyword>
<keyword id="KW-0413">Isomerase</keyword>
<keyword id="KW-0547">Nucleotide-binding</keyword>
<keyword id="KW-1185">Reference proteome</keyword>
<name>RECG_ACIFI</name>